<proteinExistence type="evidence at protein level"/>
<dbReference type="EMBL" id="AJ306405">
    <property type="protein sequence ID" value="CAC51306.1"/>
    <property type="molecule type" value="mRNA"/>
</dbReference>
<dbReference type="EMBL" id="AJ409064">
    <property type="protein sequence ID" value="CAC51515.1"/>
    <property type="molecule type" value="Genomic_DNA"/>
</dbReference>
<dbReference type="EMBL" id="AJ409065">
    <property type="protein sequence ID" value="CAC51516.1"/>
    <property type="molecule type" value="mRNA"/>
</dbReference>
<dbReference type="EMBL" id="CH471062">
    <property type="protein sequence ID" value="EAW62306.1"/>
    <property type="molecule type" value="Genomic_DNA"/>
</dbReference>
<dbReference type="EMBL" id="CH471062">
    <property type="protein sequence ID" value="EAW62307.1"/>
    <property type="molecule type" value="Genomic_DNA"/>
</dbReference>
<dbReference type="EMBL" id="BC070199">
    <property type="protein sequence ID" value="AAH70199.1"/>
    <property type="molecule type" value="mRNA"/>
</dbReference>
<dbReference type="CCDS" id="CCDS4163.1"/>
<dbReference type="RefSeq" id="NP_443203.1">
    <property type="nucleotide sequence ID" value="NM_052971.3"/>
</dbReference>
<dbReference type="PDB" id="2L1Q">
    <property type="method" value="NMR"/>
    <property type="chains" value="A=38-77"/>
</dbReference>
<dbReference type="PDBsum" id="2L1Q"/>
<dbReference type="SMR" id="Q969E1"/>
<dbReference type="BioGRID" id="125535">
    <property type="interactions" value="13"/>
</dbReference>
<dbReference type="FunCoup" id="Q969E1">
    <property type="interactions" value="155"/>
</dbReference>
<dbReference type="IntAct" id="Q969E1">
    <property type="interactions" value="10"/>
</dbReference>
<dbReference type="STRING" id="9606.ENSP00000296877"/>
<dbReference type="iPTMnet" id="Q969E1"/>
<dbReference type="PhosphoSitePlus" id="Q969E1"/>
<dbReference type="BioMuta" id="LEAP2"/>
<dbReference type="DMDM" id="20138667"/>
<dbReference type="MassIVE" id="Q969E1"/>
<dbReference type="PaxDb" id="9606-ENSP00000296877"/>
<dbReference type="PeptideAtlas" id="Q969E1"/>
<dbReference type="ProteomicsDB" id="75739"/>
<dbReference type="Antibodypedia" id="26190">
    <property type="antibodies" value="30 antibodies from 10 providers"/>
</dbReference>
<dbReference type="DNASU" id="116842"/>
<dbReference type="Ensembl" id="ENST00000296877.3">
    <property type="protein sequence ID" value="ENSP00000296877.2"/>
    <property type="gene ID" value="ENSG00000164406.8"/>
</dbReference>
<dbReference type="GeneID" id="116842"/>
<dbReference type="KEGG" id="hsa:116842"/>
<dbReference type="MANE-Select" id="ENST00000296877.3">
    <property type="protein sequence ID" value="ENSP00000296877.2"/>
    <property type="RefSeq nucleotide sequence ID" value="NM_052971.3"/>
    <property type="RefSeq protein sequence ID" value="NP_443203.1"/>
</dbReference>
<dbReference type="UCSC" id="uc003kyc.4">
    <property type="organism name" value="human"/>
</dbReference>
<dbReference type="AGR" id="HGNC:29571"/>
<dbReference type="CTD" id="116842"/>
<dbReference type="DisGeNET" id="116842"/>
<dbReference type="GeneCards" id="LEAP2"/>
<dbReference type="HGNC" id="HGNC:29571">
    <property type="gene designation" value="LEAP2"/>
</dbReference>
<dbReference type="HPA" id="ENSG00000164406">
    <property type="expression patterns" value="Tissue enriched (liver)"/>
</dbReference>
<dbReference type="MIM" id="611373">
    <property type="type" value="gene"/>
</dbReference>
<dbReference type="neXtProt" id="NX_Q969E1"/>
<dbReference type="OpenTargets" id="ENSG00000164406"/>
<dbReference type="PharmGKB" id="PA162393840"/>
<dbReference type="VEuPathDB" id="HostDB:ENSG00000164406"/>
<dbReference type="eggNOG" id="ENOG502SD5B">
    <property type="taxonomic scope" value="Eukaryota"/>
</dbReference>
<dbReference type="GeneTree" id="ENSGT00390000013467"/>
<dbReference type="HOGENOM" id="CLU_178163_0_0_1"/>
<dbReference type="InParanoid" id="Q969E1"/>
<dbReference type="OMA" id="CITMLCR"/>
<dbReference type="OrthoDB" id="9450163at2759"/>
<dbReference type="PAN-GO" id="Q969E1">
    <property type="GO annotations" value="1 GO annotation based on evolutionary models"/>
</dbReference>
<dbReference type="PhylomeDB" id="Q969E1"/>
<dbReference type="TreeFam" id="TF336274"/>
<dbReference type="PathwayCommons" id="Q969E1"/>
<dbReference type="Reactome" id="R-HSA-6803157">
    <property type="pathway name" value="Antimicrobial peptides"/>
</dbReference>
<dbReference type="BioGRID-ORCS" id="116842">
    <property type="hits" value="7 hits in 1119 CRISPR screens"/>
</dbReference>
<dbReference type="EvolutionaryTrace" id="Q969E1"/>
<dbReference type="GenomeRNAi" id="116842"/>
<dbReference type="Pharos" id="Q969E1">
    <property type="development level" value="Tbio"/>
</dbReference>
<dbReference type="PRO" id="PR:Q969E1"/>
<dbReference type="Proteomes" id="UP000005640">
    <property type="component" value="Chromosome 5"/>
</dbReference>
<dbReference type="RNAct" id="Q969E1">
    <property type="molecule type" value="protein"/>
</dbReference>
<dbReference type="Bgee" id="ENSG00000164406">
    <property type="expression patterns" value="Expressed in right lobe of liver and 140 other cell types or tissues"/>
</dbReference>
<dbReference type="GO" id="GO:0005576">
    <property type="term" value="C:extracellular region"/>
    <property type="evidence" value="ECO:0000304"/>
    <property type="project" value="Reactome"/>
</dbReference>
<dbReference type="GO" id="GO:0042742">
    <property type="term" value="P:defense response to bacterium"/>
    <property type="evidence" value="ECO:0007669"/>
    <property type="project" value="UniProtKB-KW"/>
</dbReference>
<dbReference type="FunFam" id="4.10.40.50:FF:000001">
    <property type="entry name" value="liver-expressed antimicrobial peptide 2"/>
    <property type="match status" value="1"/>
</dbReference>
<dbReference type="Gene3D" id="4.10.40.50">
    <property type="match status" value="1"/>
</dbReference>
<dbReference type="InterPro" id="IPR009955">
    <property type="entry name" value="LEAP-2"/>
</dbReference>
<dbReference type="PANTHER" id="PTHR21007">
    <property type="entry name" value="LIVER EXPRESSED ANTIMICROBIAL PEPTIDE 2"/>
    <property type="match status" value="1"/>
</dbReference>
<dbReference type="PANTHER" id="PTHR21007:SF1">
    <property type="entry name" value="LIVER-EXPRESSED ANTIMICROBIAL PEPTIDE 2"/>
    <property type="match status" value="1"/>
</dbReference>
<dbReference type="Pfam" id="PF07359">
    <property type="entry name" value="LEAP-2"/>
    <property type="match status" value="1"/>
</dbReference>
<protein>
    <recommendedName>
        <fullName>Liver-expressed antimicrobial peptide 2</fullName>
        <shortName>LEAP-2</shortName>
    </recommendedName>
</protein>
<sequence>MWHLKLCAVLMIFLLLLGQIDGSPIPEVSSAKRRPRRMTPFWRGVSLRPIGASCRDDSECITRLCRKRRCSLSVAQE</sequence>
<comment type="function">
    <text evidence="2">Has an antimicrobial activity.</text>
</comment>
<comment type="subcellular location">
    <subcellularLocation>
        <location>Secreted</location>
    </subcellularLocation>
</comment>
<comment type="similarity">
    <text evidence="3">Belongs to the LEAP2 family.</text>
</comment>
<feature type="signal peptide" evidence="1">
    <location>
        <begin position="1"/>
        <end position="22"/>
    </location>
</feature>
<feature type="propeptide" id="PRO_0000017355">
    <location>
        <begin position="23"/>
        <end position="37"/>
    </location>
</feature>
<feature type="chain" id="PRO_0000017356" description="Liver-expressed antimicrobial peptide 2">
    <location>
        <begin position="38"/>
        <end position="77"/>
    </location>
</feature>
<feature type="disulfide bond">
    <location>
        <begin position="54"/>
        <end position="65"/>
    </location>
</feature>
<feature type="disulfide bond">
    <location>
        <begin position="60"/>
        <end position="70"/>
    </location>
</feature>
<feature type="strand" evidence="4">
    <location>
        <begin position="46"/>
        <end position="48"/>
    </location>
</feature>
<feature type="helix" evidence="4">
    <location>
        <begin position="57"/>
        <end position="59"/>
    </location>
</feature>
<evidence type="ECO:0000255" key="1"/>
<evidence type="ECO:0000269" key="2">
    <source>
    </source>
</evidence>
<evidence type="ECO:0000305" key="3"/>
<evidence type="ECO:0007829" key="4">
    <source>
        <dbReference type="PDB" id="2L1Q"/>
    </source>
</evidence>
<gene>
    <name type="primary">LEAP2</name>
</gene>
<keyword id="KW-0002">3D-structure</keyword>
<keyword id="KW-0044">Antibiotic</keyword>
<keyword id="KW-0929">Antimicrobial</keyword>
<keyword id="KW-0165">Cleavage on pair of basic residues</keyword>
<keyword id="KW-1015">Disulfide bond</keyword>
<keyword id="KW-1185">Reference proteome</keyword>
<keyword id="KW-0964">Secreted</keyword>
<keyword id="KW-0732">Signal</keyword>
<reference key="1">
    <citation type="journal article" date="2003" name="Protein Sci.">
        <title>Isolation and biochemical characterization of LEAP-2, a novel blood peptide expressed in the liver.</title>
        <authorList>
            <person name="Krause A."/>
            <person name="Sillard R."/>
            <person name="Kleemeier B."/>
            <person name="Kluever E."/>
            <person name="Maronde E."/>
            <person name="Conejo-Garcia J.-R."/>
            <person name="Forssmann W.-G."/>
            <person name="Schulz-Knappe P."/>
            <person name="Nehls M.C."/>
            <person name="Wattler F."/>
            <person name="Wattler S."/>
            <person name="Adermann K."/>
        </authorList>
    </citation>
    <scope>NUCLEOTIDE SEQUENCE [MRNA]</scope>
    <scope>DISULFIDE BONDS</scope>
    <source>
        <tissue>Liver</tissue>
        <tissue>Lung</tissue>
    </source>
</reference>
<reference key="2">
    <citation type="submission" date="2005-09" db="EMBL/GenBank/DDBJ databases">
        <authorList>
            <person name="Mural R.J."/>
            <person name="Istrail S."/>
            <person name="Sutton G.G."/>
            <person name="Florea L."/>
            <person name="Halpern A.L."/>
            <person name="Mobarry C.M."/>
            <person name="Lippert R."/>
            <person name="Walenz B."/>
            <person name="Shatkay H."/>
            <person name="Dew I."/>
            <person name="Miller J.R."/>
            <person name="Flanigan M.J."/>
            <person name="Edwards N.J."/>
            <person name="Bolanos R."/>
            <person name="Fasulo D."/>
            <person name="Halldorsson B.V."/>
            <person name="Hannenhalli S."/>
            <person name="Turner R."/>
            <person name="Yooseph S."/>
            <person name="Lu F."/>
            <person name="Nusskern D.R."/>
            <person name="Shue B.C."/>
            <person name="Zheng X.H."/>
            <person name="Zhong F."/>
            <person name="Delcher A.L."/>
            <person name="Huson D.H."/>
            <person name="Kravitz S.A."/>
            <person name="Mouchard L."/>
            <person name="Reinert K."/>
            <person name="Remington K.A."/>
            <person name="Clark A.G."/>
            <person name="Waterman M.S."/>
            <person name="Eichler E.E."/>
            <person name="Adams M.D."/>
            <person name="Hunkapiller M.W."/>
            <person name="Myers E.W."/>
            <person name="Venter J.C."/>
        </authorList>
    </citation>
    <scope>NUCLEOTIDE SEQUENCE [LARGE SCALE GENOMIC DNA]</scope>
</reference>
<reference key="3">
    <citation type="journal article" date="2004" name="Genome Res.">
        <title>The status, quality, and expansion of the NIH full-length cDNA project: the Mammalian Gene Collection (MGC).</title>
        <authorList>
            <consortium name="The MGC Project Team"/>
        </authorList>
    </citation>
    <scope>NUCLEOTIDE SEQUENCE [LARGE SCALE MRNA]</scope>
    <source>
        <tissue>Liver</tissue>
    </source>
</reference>
<reference key="4">
    <citation type="journal article" date="2010" name="ChemBioChem">
        <title>Structural and functional analysis of human liver-expressed antimicrobial peptide 2.</title>
        <authorList>
            <person name="Henriques S.T."/>
            <person name="Tan C.C."/>
            <person name="Craik D.J."/>
            <person name="Clark R.J."/>
        </authorList>
    </citation>
    <scope>STRUCTURE BY NMR OF 38-77</scope>
    <scope>FUNCTION</scope>
    <scope>DISULFIDE BONDS</scope>
</reference>
<organism>
    <name type="scientific">Homo sapiens</name>
    <name type="common">Human</name>
    <dbReference type="NCBI Taxonomy" id="9606"/>
    <lineage>
        <taxon>Eukaryota</taxon>
        <taxon>Metazoa</taxon>
        <taxon>Chordata</taxon>
        <taxon>Craniata</taxon>
        <taxon>Vertebrata</taxon>
        <taxon>Euteleostomi</taxon>
        <taxon>Mammalia</taxon>
        <taxon>Eutheria</taxon>
        <taxon>Euarchontoglires</taxon>
        <taxon>Primates</taxon>
        <taxon>Haplorrhini</taxon>
        <taxon>Catarrhini</taxon>
        <taxon>Hominidae</taxon>
        <taxon>Homo</taxon>
    </lineage>
</organism>
<name>LEAP2_HUMAN</name>
<accession>Q969E1</accession>
<accession>D3DQ91</accession>